<keyword id="KW-0687">Ribonucleoprotein</keyword>
<keyword id="KW-0689">Ribosomal protein</keyword>
<keyword id="KW-0694">RNA-binding</keyword>
<keyword id="KW-0699">rRNA-binding</keyword>
<gene>
    <name evidence="1" type="primary">rplV</name>
    <name type="ordered locus">TRQ2_1389</name>
</gene>
<comment type="function">
    <text evidence="1">This protein binds specifically to 23S rRNA; its binding is stimulated by other ribosomal proteins, e.g. L4, L17, and L20. It is important during the early stages of 50S assembly. It makes multiple contacts with different domains of the 23S rRNA in the assembled 50S subunit and ribosome (By similarity).</text>
</comment>
<comment type="function">
    <text evidence="1">The globular domain of the protein is located near the polypeptide exit tunnel on the outside of the subunit, while an extended beta-hairpin is found that lines the wall of the exit tunnel in the center of the 70S ribosome.</text>
</comment>
<comment type="subunit">
    <text evidence="1">Part of the 50S ribosomal subunit.</text>
</comment>
<comment type="similarity">
    <text evidence="1">Belongs to the universal ribosomal protein uL22 family.</text>
</comment>
<organism>
    <name type="scientific">Thermotoga sp. (strain RQ2)</name>
    <dbReference type="NCBI Taxonomy" id="126740"/>
    <lineage>
        <taxon>Bacteria</taxon>
        <taxon>Thermotogati</taxon>
        <taxon>Thermotogota</taxon>
        <taxon>Thermotogae</taxon>
        <taxon>Thermotogales</taxon>
        <taxon>Thermotogaceae</taxon>
        <taxon>Thermotoga</taxon>
    </lineage>
</organism>
<evidence type="ECO:0000255" key="1">
    <source>
        <dbReference type="HAMAP-Rule" id="MF_01331"/>
    </source>
</evidence>
<evidence type="ECO:0000305" key="2"/>
<feature type="chain" id="PRO_0000354530" description="Large ribosomal subunit protein uL22">
    <location>
        <begin position="1"/>
        <end position="159"/>
    </location>
</feature>
<protein>
    <recommendedName>
        <fullName evidence="1">Large ribosomal subunit protein uL22</fullName>
    </recommendedName>
    <alternativeName>
        <fullName evidence="2">50S ribosomal protein L22</fullName>
    </alternativeName>
</protein>
<sequence>MKLQVPRSSLKRSIFHKKRKELLSSLPKIEAKAVARYIRISPRKARAIANTIRGKSVEEAFQILAFSPKKAARIMEKVLKSAVANAENNFGLSVENLYVSECYVNDGPRMKRIWPRGRGRADIIQKRMSHITVVVRDRSKEDEYRKALEELEKKISSEE</sequence>
<reference key="1">
    <citation type="journal article" date="2011" name="J. Bacteriol.">
        <title>Genome sequence of Thermotoga sp. strain RQ2, a hyperthermophilic bacterium isolated from a geothermally heated region of the seafloor near Ribeira Quente, the Azores.</title>
        <authorList>
            <person name="Swithers K.S."/>
            <person name="DiPippo J.L."/>
            <person name="Bruce D.C."/>
            <person name="Detter C."/>
            <person name="Tapia R."/>
            <person name="Han S."/>
            <person name="Saunders E."/>
            <person name="Goodwin L.A."/>
            <person name="Han J."/>
            <person name="Woyke T."/>
            <person name="Pitluck S."/>
            <person name="Pennacchio L."/>
            <person name="Nolan M."/>
            <person name="Mikhailova N."/>
            <person name="Lykidis A."/>
            <person name="Land M.L."/>
            <person name="Brettin T."/>
            <person name="Stetter K.O."/>
            <person name="Nelson K.E."/>
            <person name="Gogarten J.P."/>
            <person name="Noll K.M."/>
        </authorList>
    </citation>
    <scope>NUCLEOTIDE SEQUENCE [LARGE SCALE GENOMIC DNA]</scope>
    <source>
        <strain>RQ2</strain>
    </source>
</reference>
<proteinExistence type="inferred from homology"/>
<name>RL22_THESQ</name>
<dbReference type="EMBL" id="CP000969">
    <property type="protein sequence ID" value="ACB09733.1"/>
    <property type="molecule type" value="Genomic_DNA"/>
</dbReference>
<dbReference type="RefSeq" id="WP_012311094.1">
    <property type="nucleotide sequence ID" value="NC_010483.1"/>
</dbReference>
<dbReference type="SMR" id="B1LBN5"/>
<dbReference type="KEGG" id="trq:TRQ2_1389"/>
<dbReference type="HOGENOM" id="CLU_083987_3_1_0"/>
<dbReference type="Proteomes" id="UP000001687">
    <property type="component" value="Chromosome"/>
</dbReference>
<dbReference type="GO" id="GO:0022625">
    <property type="term" value="C:cytosolic large ribosomal subunit"/>
    <property type="evidence" value="ECO:0007669"/>
    <property type="project" value="TreeGrafter"/>
</dbReference>
<dbReference type="GO" id="GO:0019843">
    <property type="term" value="F:rRNA binding"/>
    <property type="evidence" value="ECO:0007669"/>
    <property type="project" value="UniProtKB-UniRule"/>
</dbReference>
<dbReference type="GO" id="GO:0003735">
    <property type="term" value="F:structural constituent of ribosome"/>
    <property type="evidence" value="ECO:0007669"/>
    <property type="project" value="InterPro"/>
</dbReference>
<dbReference type="GO" id="GO:0006412">
    <property type="term" value="P:translation"/>
    <property type="evidence" value="ECO:0007669"/>
    <property type="project" value="UniProtKB-UniRule"/>
</dbReference>
<dbReference type="CDD" id="cd00336">
    <property type="entry name" value="Ribosomal_L22"/>
    <property type="match status" value="1"/>
</dbReference>
<dbReference type="FunFam" id="3.90.470.10:FF:000011">
    <property type="entry name" value="50S ribosomal protein L22"/>
    <property type="match status" value="1"/>
</dbReference>
<dbReference type="Gene3D" id="3.90.470.10">
    <property type="entry name" value="Ribosomal protein L22/L17"/>
    <property type="match status" value="1"/>
</dbReference>
<dbReference type="HAMAP" id="MF_01331_B">
    <property type="entry name" value="Ribosomal_uL22_B"/>
    <property type="match status" value="1"/>
</dbReference>
<dbReference type="InterPro" id="IPR001063">
    <property type="entry name" value="Ribosomal_uL22"/>
</dbReference>
<dbReference type="InterPro" id="IPR005727">
    <property type="entry name" value="Ribosomal_uL22_bac/chlpt-type"/>
</dbReference>
<dbReference type="InterPro" id="IPR047867">
    <property type="entry name" value="Ribosomal_uL22_bac/org-type"/>
</dbReference>
<dbReference type="InterPro" id="IPR018260">
    <property type="entry name" value="Ribosomal_uL22_CS"/>
</dbReference>
<dbReference type="InterPro" id="IPR036394">
    <property type="entry name" value="Ribosomal_uL22_sf"/>
</dbReference>
<dbReference type="NCBIfam" id="TIGR01044">
    <property type="entry name" value="rplV_bact"/>
    <property type="match status" value="1"/>
</dbReference>
<dbReference type="PANTHER" id="PTHR13501">
    <property type="entry name" value="CHLOROPLAST 50S RIBOSOMAL PROTEIN L22-RELATED"/>
    <property type="match status" value="1"/>
</dbReference>
<dbReference type="PANTHER" id="PTHR13501:SF8">
    <property type="entry name" value="LARGE RIBOSOMAL SUBUNIT PROTEIN UL22M"/>
    <property type="match status" value="1"/>
</dbReference>
<dbReference type="Pfam" id="PF00237">
    <property type="entry name" value="Ribosomal_L22"/>
    <property type="match status" value="1"/>
</dbReference>
<dbReference type="SUPFAM" id="SSF54843">
    <property type="entry name" value="Ribosomal protein L22"/>
    <property type="match status" value="1"/>
</dbReference>
<dbReference type="PROSITE" id="PS00464">
    <property type="entry name" value="RIBOSOMAL_L22"/>
    <property type="match status" value="1"/>
</dbReference>
<accession>B1LBN5</accession>